<gene>
    <name evidence="1" type="primary">mshA</name>
    <name type="ordered locus">CE0422</name>
</gene>
<proteinExistence type="inferred from homology"/>
<accession>Q8FSH1</accession>
<dbReference type="EC" id="2.4.1.250" evidence="1"/>
<dbReference type="EMBL" id="BA000035">
    <property type="protein sequence ID" value="BAC17232.1"/>
    <property type="molecule type" value="Genomic_DNA"/>
</dbReference>
<dbReference type="RefSeq" id="WP_006770340.1">
    <property type="nucleotide sequence ID" value="NC_004369.1"/>
</dbReference>
<dbReference type="SMR" id="Q8FSH1"/>
<dbReference type="STRING" id="196164.gene:10740820"/>
<dbReference type="CAZy" id="GT4">
    <property type="family name" value="Glycosyltransferase Family 4"/>
</dbReference>
<dbReference type="KEGG" id="cef:CE0422"/>
<dbReference type="eggNOG" id="COG0438">
    <property type="taxonomic scope" value="Bacteria"/>
</dbReference>
<dbReference type="HOGENOM" id="CLU_009583_2_3_11"/>
<dbReference type="OrthoDB" id="9810929at2"/>
<dbReference type="Proteomes" id="UP000001409">
    <property type="component" value="Chromosome"/>
</dbReference>
<dbReference type="GO" id="GO:0008375">
    <property type="term" value="F:acetylglucosaminyltransferase activity"/>
    <property type="evidence" value="ECO:0007669"/>
    <property type="project" value="UniProtKB-UniRule"/>
</dbReference>
<dbReference type="GO" id="GO:0102710">
    <property type="term" value="F:D-inositol-3-phosphate glycosyltransferase activity"/>
    <property type="evidence" value="ECO:0007669"/>
    <property type="project" value="UniProtKB-EC"/>
</dbReference>
<dbReference type="GO" id="GO:0000287">
    <property type="term" value="F:magnesium ion binding"/>
    <property type="evidence" value="ECO:0007669"/>
    <property type="project" value="UniProtKB-UniRule"/>
</dbReference>
<dbReference type="GO" id="GO:0010125">
    <property type="term" value="P:mycothiol biosynthetic process"/>
    <property type="evidence" value="ECO:0007669"/>
    <property type="project" value="UniProtKB-UniRule"/>
</dbReference>
<dbReference type="CDD" id="cd03800">
    <property type="entry name" value="GT4_sucrose_synthase"/>
    <property type="match status" value="1"/>
</dbReference>
<dbReference type="Gene3D" id="3.40.50.2000">
    <property type="entry name" value="Glycogen Phosphorylase B"/>
    <property type="match status" value="2"/>
</dbReference>
<dbReference type="HAMAP" id="MF_01695">
    <property type="entry name" value="MshA"/>
    <property type="match status" value="1"/>
</dbReference>
<dbReference type="InterPro" id="IPR001296">
    <property type="entry name" value="Glyco_trans_1"/>
</dbReference>
<dbReference type="InterPro" id="IPR028098">
    <property type="entry name" value="Glyco_trans_4-like_N"/>
</dbReference>
<dbReference type="InterPro" id="IPR017814">
    <property type="entry name" value="Mycothiol_biosynthesis_MshA"/>
</dbReference>
<dbReference type="NCBIfam" id="TIGR03449">
    <property type="entry name" value="mycothiol_MshA"/>
    <property type="match status" value="1"/>
</dbReference>
<dbReference type="PANTHER" id="PTHR12526:SF510">
    <property type="entry name" value="D-INOSITOL 3-PHOSPHATE GLYCOSYLTRANSFERASE"/>
    <property type="match status" value="1"/>
</dbReference>
<dbReference type="PANTHER" id="PTHR12526">
    <property type="entry name" value="GLYCOSYLTRANSFERASE"/>
    <property type="match status" value="1"/>
</dbReference>
<dbReference type="Pfam" id="PF13579">
    <property type="entry name" value="Glyco_trans_4_4"/>
    <property type="match status" value="1"/>
</dbReference>
<dbReference type="Pfam" id="PF00534">
    <property type="entry name" value="Glycos_transf_1"/>
    <property type="match status" value="1"/>
</dbReference>
<dbReference type="SUPFAM" id="SSF53756">
    <property type="entry name" value="UDP-Glycosyltransferase/glycogen phosphorylase"/>
    <property type="match status" value="1"/>
</dbReference>
<evidence type="ECO:0000255" key="1">
    <source>
        <dbReference type="HAMAP-Rule" id="MF_01695"/>
    </source>
</evidence>
<feature type="chain" id="PRO_0000400117" description="D-inositol 3-phosphate glycosyltransferase">
    <location>
        <begin position="1"/>
        <end position="424"/>
    </location>
</feature>
<feature type="binding site" evidence="1">
    <location>
        <position position="9"/>
    </location>
    <ligand>
        <name>1D-myo-inositol 3-phosphate</name>
        <dbReference type="ChEBI" id="CHEBI:58401"/>
    </ligand>
</feature>
<feature type="binding site" evidence="1">
    <location>
        <begin position="15"/>
        <end position="16"/>
    </location>
    <ligand>
        <name>UDP-N-acetyl-alpha-D-glucosamine</name>
        <dbReference type="ChEBI" id="CHEBI:57705"/>
    </ligand>
</feature>
<feature type="binding site" evidence="1">
    <location>
        <begin position="20"/>
        <end position="25"/>
    </location>
    <ligand>
        <name>1D-myo-inositol 3-phosphate</name>
        <dbReference type="ChEBI" id="CHEBI:58401"/>
    </ligand>
</feature>
<feature type="binding site" evidence="1">
    <location>
        <position position="23"/>
    </location>
    <ligand>
        <name>UDP-N-acetyl-alpha-D-glucosamine</name>
        <dbReference type="ChEBI" id="CHEBI:57705"/>
    </ligand>
</feature>
<feature type="binding site" evidence="1">
    <location>
        <position position="78"/>
    </location>
    <ligand>
        <name>1D-myo-inositol 3-phosphate</name>
        <dbReference type="ChEBI" id="CHEBI:58401"/>
    </ligand>
</feature>
<feature type="binding site" evidence="1">
    <location>
        <position position="110"/>
    </location>
    <ligand>
        <name>1D-myo-inositol 3-phosphate</name>
        <dbReference type="ChEBI" id="CHEBI:58401"/>
    </ligand>
</feature>
<feature type="binding site" evidence="1">
    <location>
        <position position="134"/>
    </location>
    <ligand>
        <name>1D-myo-inositol 3-phosphate</name>
        <dbReference type="ChEBI" id="CHEBI:58401"/>
    </ligand>
</feature>
<feature type="binding site" evidence="1">
    <location>
        <position position="154"/>
    </location>
    <ligand>
        <name>1D-myo-inositol 3-phosphate</name>
        <dbReference type="ChEBI" id="CHEBI:58401"/>
    </ligand>
</feature>
<feature type="binding site" evidence="1">
    <location>
        <position position="231"/>
    </location>
    <ligand>
        <name>UDP-N-acetyl-alpha-D-glucosamine</name>
        <dbReference type="ChEBI" id="CHEBI:57705"/>
    </ligand>
</feature>
<feature type="binding site" evidence="1">
    <location>
        <position position="236"/>
    </location>
    <ligand>
        <name>UDP-N-acetyl-alpha-D-glucosamine</name>
        <dbReference type="ChEBI" id="CHEBI:57705"/>
    </ligand>
</feature>
<feature type="binding site" evidence="1">
    <location>
        <position position="294"/>
    </location>
    <ligand>
        <name>UDP-N-acetyl-alpha-D-glucosamine</name>
        <dbReference type="ChEBI" id="CHEBI:57705"/>
    </ligand>
</feature>
<feature type="binding site" evidence="1">
    <location>
        <position position="303"/>
    </location>
    <ligand>
        <name>Mg(2+)</name>
        <dbReference type="ChEBI" id="CHEBI:18420"/>
    </ligand>
</feature>
<feature type="binding site" evidence="1">
    <location>
        <position position="304"/>
    </location>
    <ligand>
        <name>Mg(2+)</name>
        <dbReference type="ChEBI" id="CHEBI:18420"/>
    </ligand>
</feature>
<feature type="binding site" evidence="1">
    <location>
        <position position="306"/>
    </location>
    <ligand>
        <name>Mg(2+)</name>
        <dbReference type="ChEBI" id="CHEBI:18420"/>
    </ligand>
</feature>
<feature type="binding site" evidence="1">
    <location>
        <position position="316"/>
    </location>
    <ligand>
        <name>UDP-N-acetyl-alpha-D-glucosamine</name>
        <dbReference type="ChEBI" id="CHEBI:57705"/>
    </ligand>
</feature>
<feature type="binding site" evidence="1">
    <location>
        <position position="324"/>
    </location>
    <ligand>
        <name>UDP-N-acetyl-alpha-D-glucosamine</name>
        <dbReference type="ChEBI" id="CHEBI:57705"/>
    </ligand>
</feature>
<feature type="binding site" evidence="1">
    <location>
        <position position="330"/>
    </location>
    <ligand>
        <name>Mg(2+)</name>
        <dbReference type="ChEBI" id="CHEBI:18420"/>
    </ligand>
</feature>
<reference key="1">
    <citation type="journal article" date="2003" name="Genome Res.">
        <title>Comparative complete genome sequence analysis of the amino acid replacements responsible for the thermostability of Corynebacterium efficiens.</title>
        <authorList>
            <person name="Nishio Y."/>
            <person name="Nakamura Y."/>
            <person name="Kawarabayasi Y."/>
            <person name="Usuda Y."/>
            <person name="Kimura E."/>
            <person name="Sugimoto S."/>
            <person name="Matsui K."/>
            <person name="Yamagishi A."/>
            <person name="Kikuchi H."/>
            <person name="Ikeo K."/>
            <person name="Gojobori T."/>
        </authorList>
    </citation>
    <scope>NUCLEOTIDE SEQUENCE [LARGE SCALE GENOMIC DNA]</scope>
    <source>
        <strain>DSM 44549 / YS-314 / AJ 12310 / JCM 11189 / NBRC 100395</strain>
    </source>
</reference>
<name>MSHA_COREF</name>
<keyword id="KW-0328">Glycosyltransferase</keyword>
<keyword id="KW-0460">Magnesium</keyword>
<keyword id="KW-0479">Metal-binding</keyword>
<keyword id="KW-1185">Reference proteome</keyword>
<keyword id="KW-0808">Transferase</keyword>
<comment type="function">
    <text evidence="1">Catalyzes the transfer of a N-acetyl-glucosamine moiety to 1D-myo-inositol 3-phosphate to produce 1D-myo-inositol 2-acetamido-2-deoxy-glucopyranoside 3-phosphate in the mycothiol biosynthesis pathway.</text>
</comment>
<comment type="catalytic activity">
    <reaction evidence="1">
        <text>1D-myo-inositol 3-phosphate + UDP-N-acetyl-alpha-D-glucosamine = 1D-myo-inositol 2-acetamido-2-deoxy-alpha-D-glucopyranoside 3-phosphate + UDP + H(+)</text>
        <dbReference type="Rhea" id="RHEA:26188"/>
        <dbReference type="ChEBI" id="CHEBI:15378"/>
        <dbReference type="ChEBI" id="CHEBI:57705"/>
        <dbReference type="ChEBI" id="CHEBI:58223"/>
        <dbReference type="ChEBI" id="CHEBI:58401"/>
        <dbReference type="ChEBI" id="CHEBI:58892"/>
        <dbReference type="EC" id="2.4.1.250"/>
    </reaction>
</comment>
<comment type="subunit">
    <text evidence="1">Homodimer.</text>
</comment>
<comment type="similarity">
    <text evidence="1">Belongs to the glycosyltransferase group 1 family. MshA subfamily.</text>
</comment>
<sequence length="424" mass="46017">MRVAMISMHTSPLQQPGVGDSGGMNVYILSTGTELARQGVEVDIFTRATRPSQGEVVQVAPNLRVINIVAGPYEGLAKEELSTQLAAFAGGVLEFTRRGGIEYDLIHSHYWLSGQVGWLMRDLWRIPLVHTAHTLAAVKNSYRADEDTPESEARRICEQQLVDNADVLAVNTQEELADLVHHYDADPDRISVVSPGADIALYTPGNDRATERSRRELGVPLHAKVVAFVGRLQPFKGPQVLIHAVAELLERDPQRNLRVLICGGPSGPSATPETYRNLAVELGVDKRIRFLDPRPPEELVAVYRAADIIAVPSYNESFGLVAMEAQATGTPVVAARVGGLPVAVAEGETGLLVDGHDPALWADTLATLLDDDETRIRMGQDAVEHARNFSWAATATQLSSLYSEATTAECDGGIPRRADGARWD</sequence>
<organism>
    <name type="scientific">Corynebacterium efficiens (strain DSM 44549 / YS-314 / AJ 12310 / JCM 11189 / NBRC 100395)</name>
    <dbReference type="NCBI Taxonomy" id="196164"/>
    <lineage>
        <taxon>Bacteria</taxon>
        <taxon>Bacillati</taxon>
        <taxon>Actinomycetota</taxon>
        <taxon>Actinomycetes</taxon>
        <taxon>Mycobacteriales</taxon>
        <taxon>Corynebacteriaceae</taxon>
        <taxon>Corynebacterium</taxon>
    </lineage>
</organism>
<protein>
    <recommendedName>
        <fullName>D-inositol 3-phosphate glycosyltransferase</fullName>
        <ecNumber evidence="1">2.4.1.250</ecNumber>
    </recommendedName>
    <alternativeName>
        <fullName evidence="1">N-acetylglucosamine-inositol-phosphate N-acetylglucosaminyltransferase</fullName>
        <shortName evidence="1">GlcNAc-Ins-P N-acetylglucosaminyltransferase</shortName>
    </alternativeName>
</protein>